<reference evidence="8" key="1">
    <citation type="submission" date="2010-01" db="EMBL/GenBank/DDBJ databases">
        <authorList>
            <person name="Liu Y.G."/>
        </authorList>
    </citation>
    <scope>NUCLEOTIDE SEQUENCE [MRNA]</scope>
</reference>
<reference evidence="9" key="2">
    <citation type="submission" date="2009-11" db="EMBL/GenBank/DDBJ databases">
        <authorList>
            <consortium name="Porcine genome sequencing project"/>
        </authorList>
    </citation>
    <scope>NUCLEOTIDE SEQUENCE [LARGE SCALE GENOMIC DNA]</scope>
    <source>
        <strain>Duroc</strain>
    </source>
</reference>
<reference evidence="7" key="3">
    <citation type="journal article" date="2008" name="Biol. Reprod.">
        <title>The equatorial subsegment in mammalian spermatozoa is enriched in tyrosine phosphorylated proteins.</title>
        <authorList>
            <person name="Jones R."/>
            <person name="James P.S."/>
            <person name="Oxley D."/>
            <person name="Coadwell J."/>
            <person name="Suzuki-Toyota F."/>
            <person name="Howes E.A."/>
        </authorList>
    </citation>
    <scope>PROTEIN SEQUENCE OF 259-270</scope>
    <scope>SUBCELLULAR LOCATION</scope>
    <scope>TISSUE SPECIFICITY</scope>
    <scope>PHOSPHORYLATION AT SER-256; TYR-269 AND SER-278</scope>
    <scope>IDENTIFICATION BY MASS SPECTROMETRY</scope>
</reference>
<protein>
    <recommendedName>
        <fullName evidence="7">Sperm acrosome membrane-associated protein 1</fullName>
    </recommendedName>
</protein>
<evidence type="ECO:0000250" key="1">
    <source>
        <dbReference type="UniProtKB" id="Q9DA48"/>
    </source>
</evidence>
<evidence type="ECO:0000250" key="2">
    <source>
        <dbReference type="UniProtKB" id="Q9HBV2"/>
    </source>
</evidence>
<evidence type="ECO:0000255" key="3"/>
<evidence type="ECO:0000256" key="4">
    <source>
        <dbReference type="SAM" id="MobiDB-lite"/>
    </source>
</evidence>
<evidence type="ECO:0000269" key="5">
    <source>
    </source>
</evidence>
<evidence type="ECO:0000303" key="6">
    <source>
    </source>
</evidence>
<evidence type="ECO:0000305" key="7"/>
<evidence type="ECO:0000312" key="8">
    <source>
        <dbReference type="EMBL" id="ADE28547.1"/>
    </source>
</evidence>
<evidence type="ECO:0000312" key="9">
    <source>
        <dbReference type="Proteomes" id="UP000008227"/>
    </source>
</evidence>
<keyword id="KW-0968">Cytoplasmic vesicle</keyword>
<keyword id="KW-0903">Direct protein sequencing</keyword>
<keyword id="KW-0325">Glycoprotein</keyword>
<keyword id="KW-0472">Membrane</keyword>
<keyword id="KW-0597">Phosphoprotein</keyword>
<keyword id="KW-1185">Reference proteome</keyword>
<keyword id="KW-0732">Signal</keyword>
<keyword id="KW-0812">Transmembrane</keyword>
<keyword id="KW-1133">Transmembrane helix</keyword>
<sequence length="295" mass="32239">MSPGGAGCSAGLLLTVGWLLLAGLQSTCGINVTAVQDPSLVSEGENEGEEEAENDSEVENEPQAEAEQDVSNKTVVKEVEFGMCTVTCGVGIREVLLTNGCPGGESKCIVRVEECRGPVDCGWGKPISENLESVRLSCVHTSPVNRFKYVWRLLRPNQQAVILANDSAILEVQRETHPMAFQCETLDNNEIVATVKFTVYTTAELQMKRSSRPDTDAVLVFVLTIGVIICIFVIFVLIFIIVNWATVKDFWASKASTTEIQSELSSMKYKDSTSLDQSPTEIPGHEDDALSEWNE</sequence>
<proteinExistence type="evidence at protein level"/>
<name>SACA1_PIG</name>
<gene>
    <name evidence="6" type="primary">SPACA1</name>
</gene>
<accession>D5K8A9</accession>
<organism evidence="9">
    <name type="scientific">Sus scrofa</name>
    <name type="common">Pig</name>
    <dbReference type="NCBI Taxonomy" id="9823"/>
    <lineage>
        <taxon>Eukaryota</taxon>
        <taxon>Metazoa</taxon>
        <taxon>Chordata</taxon>
        <taxon>Craniata</taxon>
        <taxon>Vertebrata</taxon>
        <taxon>Euteleostomi</taxon>
        <taxon>Mammalia</taxon>
        <taxon>Eutheria</taxon>
        <taxon>Laurasiatheria</taxon>
        <taxon>Artiodactyla</taxon>
        <taxon>Suina</taxon>
        <taxon>Suidae</taxon>
        <taxon>Sus</taxon>
    </lineage>
</organism>
<comment type="function">
    <text evidence="1">Plays a role in acrosome expansion and establishment of normal sperm morphology during spermatogenesis. Important for male fertility.</text>
</comment>
<comment type="subunit">
    <text evidence="1">Interacts with CYLC1; the interaction may be relevant for proper acrosome attachment to the nuclear envelope.</text>
</comment>
<comment type="subcellular location">
    <subcellularLocation>
        <location evidence="5">Cytoplasmic vesicle</location>
        <location evidence="5">Secretory vesicle</location>
        <location evidence="5">Acrosome inner membrane</location>
        <topology evidence="7">Single-pass type I membrane protein</topology>
    </subcellularLocation>
    <text evidence="2 5">Primarily found in the equatorial segment of the acrosome (PubMed:18448843). The tyrosine phosphorylated protein localizes to a smaller region within the equatorial segment (PubMed:18448843). Also expressed weakly in the principal segment (By similarity).</text>
</comment>
<comment type="tissue specificity">
    <text evidence="5">Detected in spermatozoa (at protein level).</text>
</comment>
<comment type="PTM">
    <text evidence="1">N-glycosylated.</text>
</comment>
<feature type="signal peptide" evidence="3">
    <location>
        <begin position="1"/>
        <end position="29"/>
    </location>
</feature>
<feature type="chain" id="PRO_5011205355" description="Sperm acrosome membrane-associated protein 1" evidence="3">
    <location>
        <begin position="30"/>
        <end position="295"/>
    </location>
</feature>
<feature type="topological domain" description="Extracellular" evidence="7">
    <location>
        <begin position="30"/>
        <end position="220"/>
    </location>
</feature>
<feature type="transmembrane region" description="Helical" evidence="3">
    <location>
        <begin position="221"/>
        <end position="241"/>
    </location>
</feature>
<feature type="topological domain" description="Cytoplasmic" evidence="7">
    <location>
        <begin position="242"/>
        <end position="295"/>
    </location>
</feature>
<feature type="region of interest" description="Disordered" evidence="4">
    <location>
        <begin position="39"/>
        <end position="71"/>
    </location>
</feature>
<feature type="region of interest" description="Disordered" evidence="4">
    <location>
        <begin position="263"/>
        <end position="295"/>
    </location>
</feature>
<feature type="compositionally biased region" description="Acidic residues" evidence="4">
    <location>
        <begin position="44"/>
        <end position="68"/>
    </location>
</feature>
<feature type="modified residue" description="Phosphoserine" evidence="5">
    <location>
        <position position="256"/>
    </location>
</feature>
<feature type="modified residue" description="Phosphotyrosine" evidence="5">
    <location>
        <position position="269"/>
    </location>
</feature>
<feature type="modified residue" description="Phosphoserine" evidence="5">
    <location>
        <position position="278"/>
    </location>
</feature>
<feature type="modified residue" description="Phosphoserine" evidence="1">
    <location>
        <position position="291"/>
    </location>
</feature>
<feature type="glycosylation site" description="N-linked (GlcNAc...) asparagine" evidence="3">
    <location>
        <position position="72"/>
    </location>
</feature>
<dbReference type="EMBL" id="GU475011">
    <property type="protein sequence ID" value="ADE28547.1"/>
    <property type="molecule type" value="mRNA"/>
</dbReference>
<dbReference type="EMBL" id="AEMK02000001">
    <property type="status" value="NOT_ANNOTATED_CDS"/>
    <property type="molecule type" value="Genomic_DNA"/>
</dbReference>
<dbReference type="RefSeq" id="NP_001177176.1">
    <property type="nucleotide sequence ID" value="NM_001190247.1"/>
</dbReference>
<dbReference type="FunCoup" id="D5K8A9">
    <property type="interactions" value="144"/>
</dbReference>
<dbReference type="STRING" id="9823.ENSSSCP00000004652"/>
<dbReference type="GlyCosmos" id="D5K8A9">
    <property type="glycosylation" value="1 site, No reported glycans"/>
</dbReference>
<dbReference type="GlyGen" id="D5K8A9">
    <property type="glycosylation" value="1 site"/>
</dbReference>
<dbReference type="iPTMnet" id="D5K8A9"/>
<dbReference type="PaxDb" id="9823-ENSSSCP00000004652"/>
<dbReference type="PeptideAtlas" id="D5K8A9"/>
<dbReference type="Ensembl" id="ENSSSCT00000004763.5">
    <property type="protein sequence ID" value="ENSSSCP00000004652.2"/>
    <property type="gene ID" value="ENSSSCG00000004308.5"/>
</dbReference>
<dbReference type="Ensembl" id="ENSSSCT00015049687.1">
    <property type="protein sequence ID" value="ENSSSCP00015019800.1"/>
    <property type="gene ID" value="ENSSSCG00015037247.1"/>
</dbReference>
<dbReference type="Ensembl" id="ENSSSCT00025088606.1">
    <property type="protein sequence ID" value="ENSSSCP00025038717.1"/>
    <property type="gene ID" value="ENSSSCG00025064612.1"/>
</dbReference>
<dbReference type="Ensembl" id="ENSSSCT00030079649.1">
    <property type="protein sequence ID" value="ENSSSCP00030036468.1"/>
    <property type="gene ID" value="ENSSSCG00030057130.1"/>
</dbReference>
<dbReference type="Ensembl" id="ENSSSCT00035096990.1">
    <property type="protein sequence ID" value="ENSSSCP00035040897.1"/>
    <property type="gene ID" value="ENSSSCG00035071702.1"/>
</dbReference>
<dbReference type="Ensembl" id="ENSSSCT00045049085.1">
    <property type="protein sequence ID" value="ENSSSCP00045034150.1"/>
    <property type="gene ID" value="ENSSSCG00045028778.1"/>
</dbReference>
<dbReference type="Ensembl" id="ENSSSCT00050103399.1">
    <property type="protein sequence ID" value="ENSSSCP00050045211.1"/>
    <property type="gene ID" value="ENSSSCG00050075410.1"/>
</dbReference>
<dbReference type="Ensembl" id="ENSSSCT00055006203.1">
    <property type="protein sequence ID" value="ENSSSCP00055004871.1"/>
    <property type="gene ID" value="ENSSSCG00055003198.1"/>
</dbReference>
<dbReference type="Ensembl" id="ENSSSCT00060069835.1">
    <property type="protein sequence ID" value="ENSSSCP00060030106.1"/>
    <property type="gene ID" value="ENSSSCG00060051315.1"/>
</dbReference>
<dbReference type="Ensembl" id="ENSSSCT00065082802.1">
    <property type="protein sequence ID" value="ENSSSCP00065036079.1"/>
    <property type="gene ID" value="ENSSSCG00065060441.1"/>
</dbReference>
<dbReference type="Ensembl" id="ENSSSCT00070049306.1">
    <property type="protein sequence ID" value="ENSSSCP00070041650.1"/>
    <property type="gene ID" value="ENSSSCG00070024706.1"/>
</dbReference>
<dbReference type="Ensembl" id="ENSSSCT00085042510">
    <property type="protein sequence ID" value="ENSSSCP00085029903"/>
    <property type="gene ID" value="ENSSSCG00085022134"/>
</dbReference>
<dbReference type="Ensembl" id="ENSSSCT00090059548">
    <property type="protein sequence ID" value="ENSSSCP00090037340"/>
    <property type="gene ID" value="ENSSSCG00090033565"/>
</dbReference>
<dbReference type="Ensembl" id="ENSSSCT00105024176">
    <property type="protein sequence ID" value="ENSSSCP00105017233"/>
    <property type="gene ID" value="ENSSSCG00105012283"/>
</dbReference>
<dbReference type="Ensembl" id="ENSSSCT00110016137">
    <property type="protein sequence ID" value="ENSSSCP00110011194"/>
    <property type="gene ID" value="ENSSSCG00110008334"/>
</dbReference>
<dbReference type="Ensembl" id="ENSSSCT00115002100">
    <property type="protein sequence ID" value="ENSSSCP00115001957"/>
    <property type="gene ID" value="ENSSSCG00115001242"/>
</dbReference>
<dbReference type="Ensembl" id="ENSSSCT00130065051">
    <property type="protein sequence ID" value="ENSSSCP00130046661"/>
    <property type="gene ID" value="ENSSSCG00130033282"/>
</dbReference>
<dbReference type="GeneID" id="100156797"/>
<dbReference type="KEGG" id="ssc:100156797"/>
<dbReference type="CTD" id="81833"/>
<dbReference type="VGNC" id="VGNC:93367">
    <property type="gene designation" value="SPACA1"/>
</dbReference>
<dbReference type="eggNOG" id="ENOG502S339">
    <property type="taxonomic scope" value="Eukaryota"/>
</dbReference>
<dbReference type="GeneTree" id="ENSGT00390000004211"/>
<dbReference type="HOGENOM" id="CLU_080745_0_0_1"/>
<dbReference type="InParanoid" id="D5K8A9"/>
<dbReference type="OMA" id="FIIVNWA"/>
<dbReference type="OrthoDB" id="9448631at2759"/>
<dbReference type="TreeFam" id="TF336918"/>
<dbReference type="Proteomes" id="UP000008227">
    <property type="component" value="Chromosome 1"/>
</dbReference>
<dbReference type="Proteomes" id="UP000314985">
    <property type="component" value="Chromosome 1"/>
</dbReference>
<dbReference type="Proteomes" id="UP000694570">
    <property type="component" value="Unplaced"/>
</dbReference>
<dbReference type="Proteomes" id="UP000694571">
    <property type="component" value="Unplaced"/>
</dbReference>
<dbReference type="Proteomes" id="UP000694720">
    <property type="component" value="Unplaced"/>
</dbReference>
<dbReference type="Proteomes" id="UP000694722">
    <property type="component" value="Unplaced"/>
</dbReference>
<dbReference type="Proteomes" id="UP000694723">
    <property type="component" value="Unplaced"/>
</dbReference>
<dbReference type="Proteomes" id="UP000694724">
    <property type="component" value="Unplaced"/>
</dbReference>
<dbReference type="Proteomes" id="UP000694725">
    <property type="component" value="Unplaced"/>
</dbReference>
<dbReference type="Proteomes" id="UP000694726">
    <property type="component" value="Unplaced"/>
</dbReference>
<dbReference type="Proteomes" id="UP000694727">
    <property type="component" value="Unplaced"/>
</dbReference>
<dbReference type="Proteomes" id="UP000694728">
    <property type="component" value="Unplaced"/>
</dbReference>
<dbReference type="Bgee" id="ENSSSCG00000004308">
    <property type="expression patterns" value="Expressed in testis and 12 other cell types or tissues"/>
</dbReference>
<dbReference type="GO" id="GO:0002080">
    <property type="term" value="C:acrosomal membrane"/>
    <property type="evidence" value="ECO:0000314"/>
    <property type="project" value="UniProtKB"/>
</dbReference>
<dbReference type="GO" id="GO:0002079">
    <property type="term" value="C:inner acrosomal membrane"/>
    <property type="evidence" value="ECO:0007669"/>
    <property type="project" value="UniProtKB-SubCell"/>
</dbReference>
<dbReference type="GO" id="GO:0001675">
    <property type="term" value="P:acrosome assembly"/>
    <property type="evidence" value="ECO:0000318"/>
    <property type="project" value="GO_Central"/>
</dbReference>
<dbReference type="CDD" id="cd13783">
    <property type="entry name" value="SPACA1"/>
    <property type="match status" value="1"/>
</dbReference>
<dbReference type="InterPro" id="IPR037878">
    <property type="entry name" value="SPACA1"/>
</dbReference>
<dbReference type="PANTHER" id="PTHR47223">
    <property type="entry name" value="SPERM ACROSOME MEMBRANE-ASSOCIATED PROTEIN 1"/>
    <property type="match status" value="1"/>
</dbReference>
<dbReference type="PANTHER" id="PTHR47223:SF1">
    <property type="entry name" value="SPERM ACROSOME MEMBRANE-ASSOCIATED PROTEIN 1"/>
    <property type="match status" value="1"/>
</dbReference>